<gene>
    <name evidence="1" type="primary">rsmG</name>
    <name type="ordered locus">Bpro_0074</name>
</gene>
<sequence>MRGGEQDLRAGLKALQLELTDSQVGQLLDYQDLIGKWTKVYNLTAVRDPVEMMTHHLLDSLAAVPPLRRHLRKTGQEQGACLLDVGSGAGLPGVVIAICCPEVAVTCVDTVAKKAAFIKQAALALKLPNLSGLHARVETITTLFDVICSRAFASLADFTQWSGDALASHGVWMAMKGKQPAEELASLPPTVEVFHVEQLQVPGLDAERCIVWMRCKSAAAGLDQQG</sequence>
<keyword id="KW-0963">Cytoplasm</keyword>
<keyword id="KW-0489">Methyltransferase</keyword>
<keyword id="KW-1185">Reference proteome</keyword>
<keyword id="KW-0698">rRNA processing</keyword>
<keyword id="KW-0949">S-adenosyl-L-methionine</keyword>
<keyword id="KW-0808">Transferase</keyword>
<accession>Q12HF1</accession>
<comment type="function">
    <text evidence="1">Specifically methylates the N7 position of guanine in position 527 of 16S rRNA.</text>
</comment>
<comment type="catalytic activity">
    <reaction evidence="1">
        <text>guanosine(527) in 16S rRNA + S-adenosyl-L-methionine = N(7)-methylguanosine(527) in 16S rRNA + S-adenosyl-L-homocysteine</text>
        <dbReference type="Rhea" id="RHEA:42732"/>
        <dbReference type="Rhea" id="RHEA-COMP:10209"/>
        <dbReference type="Rhea" id="RHEA-COMP:10210"/>
        <dbReference type="ChEBI" id="CHEBI:57856"/>
        <dbReference type="ChEBI" id="CHEBI:59789"/>
        <dbReference type="ChEBI" id="CHEBI:74269"/>
        <dbReference type="ChEBI" id="CHEBI:74480"/>
        <dbReference type="EC" id="2.1.1.170"/>
    </reaction>
</comment>
<comment type="subcellular location">
    <subcellularLocation>
        <location evidence="1">Cytoplasm</location>
    </subcellularLocation>
</comment>
<comment type="similarity">
    <text evidence="1">Belongs to the methyltransferase superfamily. RNA methyltransferase RsmG family.</text>
</comment>
<protein>
    <recommendedName>
        <fullName evidence="1">Ribosomal RNA small subunit methyltransferase G</fullName>
        <ecNumber evidence="1">2.1.1.170</ecNumber>
    </recommendedName>
    <alternativeName>
        <fullName evidence="1">16S rRNA 7-methylguanosine methyltransferase</fullName>
        <shortName evidence="1">16S rRNA m7G methyltransferase</shortName>
    </alternativeName>
</protein>
<reference key="1">
    <citation type="journal article" date="2008" name="Appl. Environ. Microbiol.">
        <title>The genome of Polaromonas sp. strain JS666: insights into the evolution of a hydrocarbon- and xenobiotic-degrading bacterium, and features of relevance to biotechnology.</title>
        <authorList>
            <person name="Mattes T.E."/>
            <person name="Alexander A.K."/>
            <person name="Richardson P.M."/>
            <person name="Munk A.C."/>
            <person name="Han C.S."/>
            <person name="Stothard P."/>
            <person name="Coleman N.V."/>
        </authorList>
    </citation>
    <scope>NUCLEOTIDE SEQUENCE [LARGE SCALE GENOMIC DNA]</scope>
    <source>
        <strain>JS666 / ATCC BAA-500</strain>
    </source>
</reference>
<proteinExistence type="inferred from homology"/>
<feature type="chain" id="PRO_1000010178" description="Ribosomal RNA small subunit methyltransferase G">
    <location>
        <begin position="1"/>
        <end position="226"/>
    </location>
</feature>
<feature type="binding site" evidence="1">
    <location>
        <position position="86"/>
    </location>
    <ligand>
        <name>S-adenosyl-L-methionine</name>
        <dbReference type="ChEBI" id="CHEBI:59789"/>
    </ligand>
</feature>
<feature type="binding site" evidence="1">
    <location>
        <position position="91"/>
    </location>
    <ligand>
        <name>S-adenosyl-L-methionine</name>
        <dbReference type="ChEBI" id="CHEBI:59789"/>
    </ligand>
</feature>
<feature type="binding site" evidence="1">
    <location>
        <begin position="137"/>
        <end position="138"/>
    </location>
    <ligand>
        <name>S-adenosyl-L-methionine</name>
        <dbReference type="ChEBI" id="CHEBI:59789"/>
    </ligand>
</feature>
<feature type="binding site" evidence="1">
    <location>
        <position position="150"/>
    </location>
    <ligand>
        <name>S-adenosyl-L-methionine</name>
        <dbReference type="ChEBI" id="CHEBI:59789"/>
    </ligand>
</feature>
<name>RSMG_POLSJ</name>
<dbReference type="EC" id="2.1.1.170" evidence="1"/>
<dbReference type="EMBL" id="CP000316">
    <property type="protein sequence ID" value="ABE42041.1"/>
    <property type="molecule type" value="Genomic_DNA"/>
</dbReference>
<dbReference type="RefSeq" id="WP_011481051.1">
    <property type="nucleotide sequence ID" value="NC_007948.1"/>
</dbReference>
<dbReference type="SMR" id="Q12HF1"/>
<dbReference type="STRING" id="296591.Bpro_0074"/>
<dbReference type="KEGG" id="pol:Bpro_0074"/>
<dbReference type="eggNOG" id="COG0357">
    <property type="taxonomic scope" value="Bacteria"/>
</dbReference>
<dbReference type="HOGENOM" id="CLU_065341_2_0_4"/>
<dbReference type="OrthoDB" id="9808773at2"/>
<dbReference type="Proteomes" id="UP000001983">
    <property type="component" value="Chromosome"/>
</dbReference>
<dbReference type="GO" id="GO:0005829">
    <property type="term" value="C:cytosol"/>
    <property type="evidence" value="ECO:0007669"/>
    <property type="project" value="TreeGrafter"/>
</dbReference>
<dbReference type="GO" id="GO:0070043">
    <property type="term" value="F:rRNA (guanine-N7-)-methyltransferase activity"/>
    <property type="evidence" value="ECO:0007669"/>
    <property type="project" value="UniProtKB-UniRule"/>
</dbReference>
<dbReference type="CDD" id="cd02440">
    <property type="entry name" value="AdoMet_MTases"/>
    <property type="match status" value="1"/>
</dbReference>
<dbReference type="Gene3D" id="3.40.50.150">
    <property type="entry name" value="Vaccinia Virus protein VP39"/>
    <property type="match status" value="1"/>
</dbReference>
<dbReference type="HAMAP" id="MF_00074">
    <property type="entry name" value="16SrRNA_methyltr_G"/>
    <property type="match status" value="1"/>
</dbReference>
<dbReference type="InterPro" id="IPR003682">
    <property type="entry name" value="rRNA_ssu_MeTfrase_G"/>
</dbReference>
<dbReference type="InterPro" id="IPR029063">
    <property type="entry name" value="SAM-dependent_MTases_sf"/>
</dbReference>
<dbReference type="NCBIfam" id="TIGR00138">
    <property type="entry name" value="rsmG_gidB"/>
    <property type="match status" value="1"/>
</dbReference>
<dbReference type="PANTHER" id="PTHR31760">
    <property type="entry name" value="S-ADENOSYL-L-METHIONINE-DEPENDENT METHYLTRANSFERASES SUPERFAMILY PROTEIN"/>
    <property type="match status" value="1"/>
</dbReference>
<dbReference type="PANTHER" id="PTHR31760:SF0">
    <property type="entry name" value="S-ADENOSYL-L-METHIONINE-DEPENDENT METHYLTRANSFERASES SUPERFAMILY PROTEIN"/>
    <property type="match status" value="1"/>
</dbReference>
<dbReference type="Pfam" id="PF02527">
    <property type="entry name" value="GidB"/>
    <property type="match status" value="1"/>
</dbReference>
<dbReference type="PIRSF" id="PIRSF003078">
    <property type="entry name" value="GidB"/>
    <property type="match status" value="1"/>
</dbReference>
<dbReference type="SUPFAM" id="SSF53335">
    <property type="entry name" value="S-adenosyl-L-methionine-dependent methyltransferases"/>
    <property type="match status" value="1"/>
</dbReference>
<evidence type="ECO:0000255" key="1">
    <source>
        <dbReference type="HAMAP-Rule" id="MF_00074"/>
    </source>
</evidence>
<organism>
    <name type="scientific">Polaromonas sp. (strain JS666 / ATCC BAA-500)</name>
    <dbReference type="NCBI Taxonomy" id="296591"/>
    <lineage>
        <taxon>Bacteria</taxon>
        <taxon>Pseudomonadati</taxon>
        <taxon>Pseudomonadota</taxon>
        <taxon>Betaproteobacteria</taxon>
        <taxon>Burkholderiales</taxon>
        <taxon>Comamonadaceae</taxon>
        <taxon>Polaromonas</taxon>
    </lineage>
</organism>